<accession>Q6GCY6</accession>
<evidence type="ECO:0000255" key="1">
    <source>
        <dbReference type="HAMAP-Rule" id="MF_00114"/>
    </source>
</evidence>
<evidence type="ECO:0000305" key="2"/>
<comment type="function">
    <text evidence="1">Catalyzes a reversible aldol reaction between acetaldehyde and D-glyceraldehyde 3-phosphate to generate 2-deoxy-D-ribose 5-phosphate.</text>
</comment>
<comment type="catalytic activity">
    <reaction evidence="1">
        <text>2-deoxy-D-ribose 5-phosphate = D-glyceraldehyde 3-phosphate + acetaldehyde</text>
        <dbReference type="Rhea" id="RHEA:12821"/>
        <dbReference type="ChEBI" id="CHEBI:15343"/>
        <dbReference type="ChEBI" id="CHEBI:59776"/>
        <dbReference type="ChEBI" id="CHEBI:62877"/>
        <dbReference type="EC" id="4.1.2.4"/>
    </reaction>
</comment>
<comment type="pathway">
    <text evidence="1">Carbohydrate degradation; 2-deoxy-D-ribose 1-phosphate degradation; D-glyceraldehyde 3-phosphate and acetaldehyde from 2-deoxy-alpha-D-ribose 1-phosphate: step 2/2.</text>
</comment>
<comment type="subcellular location">
    <subcellularLocation>
        <location evidence="1">Cytoplasm</location>
    </subcellularLocation>
</comment>
<comment type="similarity">
    <text evidence="1 2">Belongs to the DeoC/FbaB aldolase family. DeoC type 1 subfamily.</text>
</comment>
<proteinExistence type="inferred from homology"/>
<gene>
    <name evidence="1" type="primary">deoC1</name>
    <name type="synonym">dra</name>
    <name type="ordered locus">SAS0112</name>
</gene>
<feature type="chain" id="PRO_0000057263" description="Deoxyribose-phosphate aldolase 1">
    <location>
        <begin position="1"/>
        <end position="220"/>
    </location>
</feature>
<feature type="active site" description="Proton donor/acceptor" evidence="1">
    <location>
        <position position="89"/>
    </location>
</feature>
<feature type="active site" description="Schiff-base intermediate with acetaldehyde" evidence="1">
    <location>
        <position position="151"/>
    </location>
</feature>
<feature type="active site" description="Proton donor/acceptor" evidence="1">
    <location>
        <position position="180"/>
    </location>
</feature>
<reference key="1">
    <citation type="journal article" date="2004" name="Proc. Natl. Acad. Sci. U.S.A.">
        <title>Complete genomes of two clinical Staphylococcus aureus strains: evidence for the rapid evolution of virulence and drug resistance.</title>
        <authorList>
            <person name="Holden M.T.G."/>
            <person name="Feil E.J."/>
            <person name="Lindsay J.A."/>
            <person name="Peacock S.J."/>
            <person name="Day N.P.J."/>
            <person name="Enright M.C."/>
            <person name="Foster T.J."/>
            <person name="Moore C.E."/>
            <person name="Hurst L."/>
            <person name="Atkin R."/>
            <person name="Barron A."/>
            <person name="Bason N."/>
            <person name="Bentley S.D."/>
            <person name="Chillingworth C."/>
            <person name="Chillingworth T."/>
            <person name="Churcher C."/>
            <person name="Clark L."/>
            <person name="Corton C."/>
            <person name="Cronin A."/>
            <person name="Doggett J."/>
            <person name="Dowd L."/>
            <person name="Feltwell T."/>
            <person name="Hance Z."/>
            <person name="Harris B."/>
            <person name="Hauser H."/>
            <person name="Holroyd S."/>
            <person name="Jagels K."/>
            <person name="James K.D."/>
            <person name="Lennard N."/>
            <person name="Line A."/>
            <person name="Mayes R."/>
            <person name="Moule S."/>
            <person name="Mungall K."/>
            <person name="Ormond D."/>
            <person name="Quail M.A."/>
            <person name="Rabbinowitsch E."/>
            <person name="Rutherford K.M."/>
            <person name="Sanders M."/>
            <person name="Sharp S."/>
            <person name="Simmonds M."/>
            <person name="Stevens K."/>
            <person name="Whitehead S."/>
            <person name="Barrell B.G."/>
            <person name="Spratt B.G."/>
            <person name="Parkhill J."/>
        </authorList>
    </citation>
    <scope>NUCLEOTIDE SEQUENCE [LARGE SCALE GENOMIC DNA]</scope>
    <source>
        <strain>MSSA476</strain>
    </source>
</reference>
<sequence length="220" mass="23501">MKFEKYIDHTLLKPESTRTQIDQIIDEAKAYNFKSVCVNPTHVKYAAERLADSEVLVCTVIGFPLGASTTATKAFETEDAIQNGADEIDMVINIGALKDGRFDDVQQDIEAVVKVAKGHTVKVIIETVLLDHDEIVKASELTKAAGADFVKTSTGFAGGGATAEDVKLMKDTVGADVEVKASGGVRNLEDFNKMVEAGATRIGASAGVQIMQGLEADSDY</sequence>
<organism>
    <name type="scientific">Staphylococcus aureus (strain MSSA476)</name>
    <dbReference type="NCBI Taxonomy" id="282459"/>
    <lineage>
        <taxon>Bacteria</taxon>
        <taxon>Bacillati</taxon>
        <taxon>Bacillota</taxon>
        <taxon>Bacilli</taxon>
        <taxon>Bacillales</taxon>
        <taxon>Staphylococcaceae</taxon>
        <taxon>Staphylococcus</taxon>
    </lineage>
</organism>
<dbReference type="EC" id="4.1.2.4" evidence="1"/>
<dbReference type="EMBL" id="BX571857">
    <property type="protein sequence ID" value="CAG41880.1"/>
    <property type="molecule type" value="Genomic_DNA"/>
</dbReference>
<dbReference type="SMR" id="Q6GCY6"/>
<dbReference type="KEGG" id="sas:SAS0112"/>
<dbReference type="HOGENOM" id="CLU_053595_0_0_9"/>
<dbReference type="UniPathway" id="UPA00002">
    <property type="reaction ID" value="UER00468"/>
</dbReference>
<dbReference type="GO" id="GO:0005737">
    <property type="term" value="C:cytoplasm"/>
    <property type="evidence" value="ECO:0007669"/>
    <property type="project" value="UniProtKB-SubCell"/>
</dbReference>
<dbReference type="GO" id="GO:0004139">
    <property type="term" value="F:deoxyribose-phosphate aldolase activity"/>
    <property type="evidence" value="ECO:0007669"/>
    <property type="project" value="UniProtKB-UniRule"/>
</dbReference>
<dbReference type="GO" id="GO:0006018">
    <property type="term" value="P:2-deoxyribose 1-phosphate catabolic process"/>
    <property type="evidence" value="ECO:0007669"/>
    <property type="project" value="UniProtKB-UniRule"/>
</dbReference>
<dbReference type="GO" id="GO:0016052">
    <property type="term" value="P:carbohydrate catabolic process"/>
    <property type="evidence" value="ECO:0007669"/>
    <property type="project" value="TreeGrafter"/>
</dbReference>
<dbReference type="GO" id="GO:0009264">
    <property type="term" value="P:deoxyribonucleotide catabolic process"/>
    <property type="evidence" value="ECO:0007669"/>
    <property type="project" value="InterPro"/>
</dbReference>
<dbReference type="CDD" id="cd00959">
    <property type="entry name" value="DeoC"/>
    <property type="match status" value="1"/>
</dbReference>
<dbReference type="FunFam" id="3.20.20.70:FF:000044">
    <property type="entry name" value="Deoxyribose-phosphate aldolase"/>
    <property type="match status" value="1"/>
</dbReference>
<dbReference type="Gene3D" id="3.20.20.70">
    <property type="entry name" value="Aldolase class I"/>
    <property type="match status" value="1"/>
</dbReference>
<dbReference type="HAMAP" id="MF_00114">
    <property type="entry name" value="DeoC_type1"/>
    <property type="match status" value="1"/>
</dbReference>
<dbReference type="InterPro" id="IPR013785">
    <property type="entry name" value="Aldolase_TIM"/>
</dbReference>
<dbReference type="InterPro" id="IPR011343">
    <property type="entry name" value="DeoC"/>
</dbReference>
<dbReference type="InterPro" id="IPR002915">
    <property type="entry name" value="DeoC/FbaB/LacD_aldolase"/>
</dbReference>
<dbReference type="InterPro" id="IPR028581">
    <property type="entry name" value="DeoC_typeI"/>
</dbReference>
<dbReference type="NCBIfam" id="TIGR00126">
    <property type="entry name" value="deoC"/>
    <property type="match status" value="1"/>
</dbReference>
<dbReference type="PANTHER" id="PTHR10889">
    <property type="entry name" value="DEOXYRIBOSE-PHOSPHATE ALDOLASE"/>
    <property type="match status" value="1"/>
</dbReference>
<dbReference type="PANTHER" id="PTHR10889:SF1">
    <property type="entry name" value="DEOXYRIBOSE-PHOSPHATE ALDOLASE"/>
    <property type="match status" value="1"/>
</dbReference>
<dbReference type="Pfam" id="PF01791">
    <property type="entry name" value="DeoC"/>
    <property type="match status" value="1"/>
</dbReference>
<dbReference type="PIRSF" id="PIRSF001357">
    <property type="entry name" value="DeoC"/>
    <property type="match status" value="1"/>
</dbReference>
<dbReference type="SMART" id="SM01133">
    <property type="entry name" value="DeoC"/>
    <property type="match status" value="1"/>
</dbReference>
<dbReference type="SUPFAM" id="SSF51569">
    <property type="entry name" value="Aldolase"/>
    <property type="match status" value="1"/>
</dbReference>
<name>DEOC1_STAAS</name>
<keyword id="KW-0963">Cytoplasm</keyword>
<keyword id="KW-0456">Lyase</keyword>
<keyword id="KW-0704">Schiff base</keyword>
<protein>
    <recommendedName>
        <fullName evidence="1">Deoxyribose-phosphate aldolase 1</fullName>
        <shortName evidence="1">DERA 1</shortName>
        <ecNumber evidence="1">4.1.2.4</ecNumber>
    </recommendedName>
    <alternativeName>
        <fullName evidence="1">2-deoxy-D-ribose 5-phosphate aldolase 1</fullName>
    </alternativeName>
    <alternativeName>
        <fullName evidence="1">Phosphodeoxyriboaldolase 1</fullName>
        <shortName evidence="1">Deoxyriboaldolase 1</shortName>
    </alternativeName>
</protein>